<reference key="1">
    <citation type="journal article" date="2002" name="Nature">
        <title>Complete genome sequence of the model actinomycete Streptomyces coelicolor A3(2).</title>
        <authorList>
            <person name="Bentley S.D."/>
            <person name="Chater K.F."/>
            <person name="Cerdeno-Tarraga A.-M."/>
            <person name="Challis G.L."/>
            <person name="Thomson N.R."/>
            <person name="James K.D."/>
            <person name="Harris D.E."/>
            <person name="Quail M.A."/>
            <person name="Kieser H."/>
            <person name="Harper D."/>
            <person name="Bateman A."/>
            <person name="Brown S."/>
            <person name="Chandra G."/>
            <person name="Chen C.W."/>
            <person name="Collins M."/>
            <person name="Cronin A."/>
            <person name="Fraser A."/>
            <person name="Goble A."/>
            <person name="Hidalgo J."/>
            <person name="Hornsby T."/>
            <person name="Howarth S."/>
            <person name="Huang C.-H."/>
            <person name="Kieser T."/>
            <person name="Larke L."/>
            <person name="Murphy L.D."/>
            <person name="Oliver K."/>
            <person name="O'Neil S."/>
            <person name="Rabbinowitsch E."/>
            <person name="Rajandream M.A."/>
            <person name="Rutherford K.M."/>
            <person name="Rutter S."/>
            <person name="Seeger K."/>
            <person name="Saunders D."/>
            <person name="Sharp S."/>
            <person name="Squares R."/>
            <person name="Squares S."/>
            <person name="Taylor K."/>
            <person name="Warren T."/>
            <person name="Wietzorrek A."/>
            <person name="Woodward J.R."/>
            <person name="Barrell B.G."/>
            <person name="Parkhill J."/>
            <person name="Hopwood D.A."/>
        </authorList>
    </citation>
    <scope>NUCLEOTIDE SEQUENCE [LARGE SCALE GENOMIC DNA]</scope>
    <source>
        <strain>ATCC BAA-471 / A3(2) / M145</strain>
    </source>
</reference>
<proteinExistence type="inferred from homology"/>
<name>DEF2_STRCO</name>
<gene>
    <name evidence="1" type="primary">def2</name>
    <name type="ordered locus">SCO1211</name>
    <name type="ORF">2SCG58.11c</name>
</gene>
<evidence type="ECO:0000255" key="1">
    <source>
        <dbReference type="HAMAP-Rule" id="MF_00163"/>
    </source>
</evidence>
<evidence type="ECO:0000305" key="2"/>
<comment type="function">
    <text evidence="1">Removes the formyl group from the N-terminal Met of newly synthesized proteins. Requires at least a dipeptide for an efficient rate of reaction. N-terminal L-methionine is a prerequisite for activity but the enzyme has broad specificity at other positions.</text>
</comment>
<comment type="catalytic activity">
    <reaction evidence="1">
        <text>N-terminal N-formyl-L-methionyl-[peptide] + H2O = N-terminal L-methionyl-[peptide] + formate</text>
        <dbReference type="Rhea" id="RHEA:24420"/>
        <dbReference type="Rhea" id="RHEA-COMP:10639"/>
        <dbReference type="Rhea" id="RHEA-COMP:10640"/>
        <dbReference type="ChEBI" id="CHEBI:15377"/>
        <dbReference type="ChEBI" id="CHEBI:15740"/>
        <dbReference type="ChEBI" id="CHEBI:49298"/>
        <dbReference type="ChEBI" id="CHEBI:64731"/>
        <dbReference type="EC" id="3.5.1.88"/>
    </reaction>
</comment>
<comment type="cofactor">
    <cofactor evidence="1">
        <name>Fe(2+)</name>
        <dbReference type="ChEBI" id="CHEBI:29033"/>
    </cofactor>
    <text evidence="1">Binds 1 Fe(2+) ion.</text>
</comment>
<comment type="similarity">
    <text evidence="1">Belongs to the polypeptide deformylase family.</text>
</comment>
<comment type="sequence caution" evidence="2">
    <conflict type="erroneous initiation">
        <sequence resource="EMBL-CDS" id="CAC01493"/>
    </conflict>
</comment>
<organism>
    <name type="scientific">Streptomyces coelicolor (strain ATCC BAA-471 / A3(2) / M145)</name>
    <dbReference type="NCBI Taxonomy" id="100226"/>
    <lineage>
        <taxon>Bacteria</taxon>
        <taxon>Bacillati</taxon>
        <taxon>Actinomycetota</taxon>
        <taxon>Actinomycetes</taxon>
        <taxon>Kitasatosporales</taxon>
        <taxon>Streptomycetaceae</taxon>
        <taxon>Streptomyces</taxon>
        <taxon>Streptomyces albidoflavus group</taxon>
    </lineage>
</organism>
<sequence>MRQGSIPGAHGRVRPLGLLGDPVLHARCAEVTDFGPELAALVEDLFATMYAAHGVGLAANQVGEAVRVFVYDCPDDEDERHLGHVVNPRLVETGGVVVRGPEGCLSLPGLEAGTERYDEAVVTGFTVAGEPVTVRGTGFFARCLQHECDHLEGRVYADRLTGRRHRKLMRQVARASWHR</sequence>
<keyword id="KW-0378">Hydrolase</keyword>
<keyword id="KW-0408">Iron</keyword>
<keyword id="KW-0479">Metal-binding</keyword>
<keyword id="KW-0648">Protein biosynthesis</keyword>
<keyword id="KW-1185">Reference proteome</keyword>
<feature type="chain" id="PRO_0000082853" description="Peptide deformylase 2">
    <location>
        <begin position="1"/>
        <end position="179"/>
    </location>
</feature>
<feature type="active site" evidence="1">
    <location>
        <position position="147"/>
    </location>
</feature>
<feature type="binding site" evidence="1">
    <location>
        <position position="104"/>
    </location>
    <ligand>
        <name>Fe cation</name>
        <dbReference type="ChEBI" id="CHEBI:24875"/>
    </ligand>
</feature>
<feature type="binding site" evidence="1">
    <location>
        <position position="146"/>
    </location>
    <ligand>
        <name>Fe cation</name>
        <dbReference type="ChEBI" id="CHEBI:24875"/>
    </ligand>
</feature>
<feature type="binding site" evidence="1">
    <location>
        <position position="150"/>
    </location>
    <ligand>
        <name>Fe cation</name>
        <dbReference type="ChEBI" id="CHEBI:24875"/>
    </ligand>
</feature>
<protein>
    <recommendedName>
        <fullName evidence="1">Peptide deformylase 2</fullName>
        <shortName evidence="1">PDF 2</shortName>
        <ecNumber evidence="1">3.5.1.88</ecNumber>
    </recommendedName>
    <alternativeName>
        <fullName evidence="1">Polypeptide deformylase 2</fullName>
    </alternativeName>
</protein>
<dbReference type="EC" id="3.5.1.88" evidence="1"/>
<dbReference type="EMBL" id="AL939108">
    <property type="protein sequence ID" value="CAC01493.1"/>
    <property type="status" value="ALT_INIT"/>
    <property type="molecule type" value="Genomic_DNA"/>
</dbReference>
<dbReference type="RefSeq" id="NP_625500.1">
    <property type="nucleotide sequence ID" value="NC_003888.3"/>
</dbReference>
<dbReference type="SMR" id="Q9FCA2"/>
<dbReference type="FunCoup" id="Q9FCA2">
    <property type="interactions" value="197"/>
</dbReference>
<dbReference type="STRING" id="100226.gene:17758794"/>
<dbReference type="PaxDb" id="100226-SCO1211"/>
<dbReference type="KEGG" id="sco:SCO1211"/>
<dbReference type="PATRIC" id="fig|100226.15.peg.1210"/>
<dbReference type="eggNOG" id="COG0242">
    <property type="taxonomic scope" value="Bacteria"/>
</dbReference>
<dbReference type="HOGENOM" id="CLU_061901_1_2_11"/>
<dbReference type="InParanoid" id="Q9FCA2"/>
<dbReference type="OrthoDB" id="9804313at2"/>
<dbReference type="PhylomeDB" id="Q9FCA2"/>
<dbReference type="Proteomes" id="UP000001973">
    <property type="component" value="Chromosome"/>
</dbReference>
<dbReference type="GO" id="GO:0046872">
    <property type="term" value="F:metal ion binding"/>
    <property type="evidence" value="ECO:0007669"/>
    <property type="project" value="UniProtKB-KW"/>
</dbReference>
<dbReference type="GO" id="GO:0042586">
    <property type="term" value="F:peptide deformylase activity"/>
    <property type="evidence" value="ECO:0000318"/>
    <property type="project" value="GO_Central"/>
</dbReference>
<dbReference type="GO" id="GO:0043686">
    <property type="term" value="P:co-translational protein modification"/>
    <property type="evidence" value="ECO:0000318"/>
    <property type="project" value="GO_Central"/>
</dbReference>
<dbReference type="GO" id="GO:0006412">
    <property type="term" value="P:translation"/>
    <property type="evidence" value="ECO:0007669"/>
    <property type="project" value="UniProtKB-UniRule"/>
</dbReference>
<dbReference type="CDD" id="cd00487">
    <property type="entry name" value="Pep_deformylase"/>
    <property type="match status" value="1"/>
</dbReference>
<dbReference type="FunFam" id="3.90.45.10:FF:000004">
    <property type="entry name" value="Peptide deformylase"/>
    <property type="match status" value="1"/>
</dbReference>
<dbReference type="Gene3D" id="3.90.45.10">
    <property type="entry name" value="Peptide deformylase"/>
    <property type="match status" value="1"/>
</dbReference>
<dbReference type="HAMAP" id="MF_00163">
    <property type="entry name" value="Pep_deformylase"/>
    <property type="match status" value="1"/>
</dbReference>
<dbReference type="InterPro" id="IPR023635">
    <property type="entry name" value="Peptide_deformylase"/>
</dbReference>
<dbReference type="InterPro" id="IPR036821">
    <property type="entry name" value="Peptide_deformylase_sf"/>
</dbReference>
<dbReference type="NCBIfam" id="TIGR00079">
    <property type="entry name" value="pept_deformyl"/>
    <property type="match status" value="1"/>
</dbReference>
<dbReference type="NCBIfam" id="NF001159">
    <property type="entry name" value="PRK00150.1-3"/>
    <property type="match status" value="1"/>
</dbReference>
<dbReference type="PANTHER" id="PTHR10458">
    <property type="entry name" value="PEPTIDE DEFORMYLASE"/>
    <property type="match status" value="1"/>
</dbReference>
<dbReference type="PANTHER" id="PTHR10458:SF2">
    <property type="entry name" value="PEPTIDE DEFORMYLASE, MITOCHONDRIAL"/>
    <property type="match status" value="1"/>
</dbReference>
<dbReference type="Pfam" id="PF01327">
    <property type="entry name" value="Pep_deformylase"/>
    <property type="match status" value="1"/>
</dbReference>
<dbReference type="PIRSF" id="PIRSF004749">
    <property type="entry name" value="Pep_def"/>
    <property type="match status" value="1"/>
</dbReference>
<dbReference type="PRINTS" id="PR01576">
    <property type="entry name" value="PDEFORMYLASE"/>
</dbReference>
<dbReference type="SUPFAM" id="SSF56420">
    <property type="entry name" value="Peptide deformylase"/>
    <property type="match status" value="1"/>
</dbReference>
<accession>Q9FCA2</accession>